<proteinExistence type="inferred from homology"/>
<dbReference type="EC" id="7.1.1.-" evidence="1"/>
<dbReference type="EMBL" id="Z00044">
    <property type="protein sequence ID" value="CAA77356.1"/>
    <property type="molecule type" value="Genomic_DNA"/>
</dbReference>
<dbReference type="PIR" id="A05194">
    <property type="entry name" value="A05194"/>
</dbReference>
<dbReference type="RefSeq" id="NP_054502.1">
    <property type="nucleotide sequence ID" value="NC_001879.2"/>
</dbReference>
<dbReference type="SMR" id="P12201"/>
<dbReference type="GeneID" id="800452"/>
<dbReference type="KEGG" id="nta:800452"/>
<dbReference type="OMA" id="NYLQCQG"/>
<dbReference type="OrthoDB" id="1243565at2759"/>
<dbReference type="Proteomes" id="UP000084051">
    <property type="component" value="Unplaced"/>
</dbReference>
<dbReference type="GO" id="GO:0009535">
    <property type="term" value="C:chloroplast thylakoid membrane"/>
    <property type="evidence" value="ECO:0007669"/>
    <property type="project" value="UniProtKB-SubCell"/>
</dbReference>
<dbReference type="GO" id="GO:0008137">
    <property type="term" value="F:NADH dehydrogenase (ubiquinone) activity"/>
    <property type="evidence" value="ECO:0007669"/>
    <property type="project" value="InterPro"/>
</dbReference>
<dbReference type="GO" id="GO:0048038">
    <property type="term" value="F:quinone binding"/>
    <property type="evidence" value="ECO:0007669"/>
    <property type="project" value="UniProtKB-KW"/>
</dbReference>
<dbReference type="GO" id="GO:0019684">
    <property type="term" value="P:photosynthesis, light reaction"/>
    <property type="evidence" value="ECO:0007669"/>
    <property type="project" value="UniProtKB-UniRule"/>
</dbReference>
<dbReference type="FunFam" id="3.30.460.80:FF:000004">
    <property type="entry name" value="NAD(P)H-quinone oxidoreductase subunit J, chloroplastic"/>
    <property type="match status" value="1"/>
</dbReference>
<dbReference type="Gene3D" id="3.30.460.80">
    <property type="entry name" value="NADH:ubiquinone oxidoreductase, 30kDa subunit"/>
    <property type="match status" value="1"/>
</dbReference>
<dbReference type="HAMAP" id="MF_01357">
    <property type="entry name" value="NDH1_NuoC"/>
    <property type="match status" value="1"/>
</dbReference>
<dbReference type="InterPro" id="IPR010218">
    <property type="entry name" value="NADH_DH_suC"/>
</dbReference>
<dbReference type="InterPro" id="IPR037232">
    <property type="entry name" value="NADH_quin_OxRdtase_su_C/D-like"/>
</dbReference>
<dbReference type="InterPro" id="IPR001268">
    <property type="entry name" value="NADH_UbQ_OxRdtase_30kDa_su"/>
</dbReference>
<dbReference type="InterPro" id="IPR020396">
    <property type="entry name" value="NADH_UbQ_OxRdtase_CS"/>
</dbReference>
<dbReference type="NCBIfam" id="NF009141">
    <property type="entry name" value="PRK12494.1"/>
    <property type="match status" value="1"/>
</dbReference>
<dbReference type="PANTHER" id="PTHR10884:SF14">
    <property type="entry name" value="NADH DEHYDROGENASE [UBIQUINONE] IRON-SULFUR PROTEIN 3, MITOCHONDRIAL"/>
    <property type="match status" value="1"/>
</dbReference>
<dbReference type="PANTHER" id="PTHR10884">
    <property type="entry name" value="NADH DEHYDROGENASE UBIQUINONE IRON-SULFUR PROTEIN 3"/>
    <property type="match status" value="1"/>
</dbReference>
<dbReference type="Pfam" id="PF00329">
    <property type="entry name" value="Complex1_30kDa"/>
    <property type="match status" value="1"/>
</dbReference>
<dbReference type="SUPFAM" id="SSF143243">
    <property type="entry name" value="Nqo5-like"/>
    <property type="match status" value="1"/>
</dbReference>
<dbReference type="PROSITE" id="PS00542">
    <property type="entry name" value="COMPLEX1_30K"/>
    <property type="match status" value="1"/>
</dbReference>
<comment type="function">
    <text evidence="1">NDH shuttles electrons from NAD(P)H:plastoquinone, via FMN and iron-sulfur (Fe-S) centers, to quinones in the photosynthetic chain and possibly in a chloroplast respiratory chain. The immediate electron acceptor for the enzyme in this species is believed to be plastoquinone. Couples the redox reaction to proton translocation, and thus conserves the redox energy in a proton gradient.</text>
</comment>
<comment type="catalytic activity">
    <reaction evidence="1">
        <text>a plastoquinone + NADH + (n+1) H(+)(in) = a plastoquinol + NAD(+) + n H(+)(out)</text>
        <dbReference type="Rhea" id="RHEA:42608"/>
        <dbReference type="Rhea" id="RHEA-COMP:9561"/>
        <dbReference type="Rhea" id="RHEA-COMP:9562"/>
        <dbReference type="ChEBI" id="CHEBI:15378"/>
        <dbReference type="ChEBI" id="CHEBI:17757"/>
        <dbReference type="ChEBI" id="CHEBI:57540"/>
        <dbReference type="ChEBI" id="CHEBI:57945"/>
        <dbReference type="ChEBI" id="CHEBI:62192"/>
    </reaction>
</comment>
<comment type="catalytic activity">
    <reaction evidence="1">
        <text>a plastoquinone + NADPH + (n+1) H(+)(in) = a plastoquinol + NADP(+) + n H(+)(out)</text>
        <dbReference type="Rhea" id="RHEA:42612"/>
        <dbReference type="Rhea" id="RHEA-COMP:9561"/>
        <dbReference type="Rhea" id="RHEA-COMP:9562"/>
        <dbReference type="ChEBI" id="CHEBI:15378"/>
        <dbReference type="ChEBI" id="CHEBI:17757"/>
        <dbReference type="ChEBI" id="CHEBI:57783"/>
        <dbReference type="ChEBI" id="CHEBI:58349"/>
        <dbReference type="ChEBI" id="CHEBI:62192"/>
    </reaction>
</comment>
<comment type="subunit">
    <text evidence="1">NDH is composed of at least 16 different subunits, 5 of which are encoded in the nucleus.</text>
</comment>
<comment type="subcellular location">
    <subcellularLocation>
        <location evidence="1">Plastid</location>
        <location evidence="1">Chloroplast thylakoid membrane</location>
        <topology evidence="1">Peripheral membrane protein</topology>
        <orientation evidence="1">Stromal side</orientation>
    </subcellularLocation>
</comment>
<comment type="similarity">
    <text evidence="1">Belongs to the complex I 30 kDa subunit family.</text>
</comment>
<keyword id="KW-0150">Chloroplast</keyword>
<keyword id="KW-0472">Membrane</keyword>
<keyword id="KW-0520">NAD</keyword>
<keyword id="KW-0521">NADP</keyword>
<keyword id="KW-0934">Plastid</keyword>
<keyword id="KW-0618">Plastoquinone</keyword>
<keyword id="KW-0874">Quinone</keyword>
<keyword id="KW-1185">Reference proteome</keyword>
<keyword id="KW-0793">Thylakoid</keyword>
<keyword id="KW-1278">Translocase</keyword>
<keyword id="KW-0813">Transport</keyword>
<gene>
    <name evidence="1" type="primary">ndhJ</name>
</gene>
<feature type="chain" id="PRO_0000118663" description="NAD(P)H-quinone oxidoreductase subunit J, chloroplastic">
    <location>
        <begin position="1"/>
        <end position="158"/>
    </location>
</feature>
<sequence length="158" mass="18595">MQGRLSAWLVKHGLIHRSLGFDYQGIETLQIKPEDWHSIAVIFYVYGYNYLRSQCAYDVAPGGLLASVYHLTRIEDGVDQPEEVCIKVFASRRNPRIPSVFWVWKSVDFQERESYDMLGISYDNHPRLKRILMPESWIGWPLRKDYIAPNFYEIQDAH</sequence>
<organism>
    <name type="scientific">Nicotiana tabacum</name>
    <name type="common">Common tobacco</name>
    <dbReference type="NCBI Taxonomy" id="4097"/>
    <lineage>
        <taxon>Eukaryota</taxon>
        <taxon>Viridiplantae</taxon>
        <taxon>Streptophyta</taxon>
        <taxon>Embryophyta</taxon>
        <taxon>Tracheophyta</taxon>
        <taxon>Spermatophyta</taxon>
        <taxon>Magnoliopsida</taxon>
        <taxon>eudicotyledons</taxon>
        <taxon>Gunneridae</taxon>
        <taxon>Pentapetalae</taxon>
        <taxon>asterids</taxon>
        <taxon>lamiids</taxon>
        <taxon>Solanales</taxon>
        <taxon>Solanaceae</taxon>
        <taxon>Nicotianoideae</taxon>
        <taxon>Nicotianeae</taxon>
        <taxon>Nicotiana</taxon>
    </lineage>
</organism>
<name>NDHJ_TOBAC</name>
<reference key="1">
    <citation type="journal article" date="1986" name="EMBO J.">
        <title>The complete nucleotide sequence of the tobacco chloroplast genome: its gene organization and expression.</title>
        <authorList>
            <person name="Shinozaki K."/>
            <person name="Ohme M."/>
            <person name="Tanaka M."/>
            <person name="Wakasugi T."/>
            <person name="Hayashida N."/>
            <person name="Matsubayashi T."/>
            <person name="Zaita N."/>
            <person name="Chunwongse J."/>
            <person name="Obokata J."/>
            <person name="Yamaguchi-Shinozaki K."/>
            <person name="Ohto C."/>
            <person name="Torazawa K."/>
            <person name="Meng B.-Y."/>
            <person name="Sugita M."/>
            <person name="Deno H."/>
            <person name="Kamogashira T."/>
            <person name="Yamada K."/>
            <person name="Kusuda J."/>
            <person name="Takaiwa F."/>
            <person name="Kato A."/>
            <person name="Tohdoh N."/>
            <person name="Shimada H."/>
            <person name="Sugiura M."/>
        </authorList>
    </citation>
    <scope>NUCLEOTIDE SEQUENCE [LARGE SCALE GENOMIC DNA]</scope>
    <source>
        <strain>cv. Bright Yellow 4</strain>
    </source>
</reference>
<geneLocation type="chloroplast"/>
<accession>P12201</accession>
<protein>
    <recommendedName>
        <fullName evidence="1">NAD(P)H-quinone oxidoreductase subunit J, chloroplastic</fullName>
        <ecNumber evidence="1">7.1.1.-</ecNumber>
    </recommendedName>
    <alternativeName>
        <fullName>NAD(P)H dehydrogenase subunit J</fullName>
    </alternativeName>
    <alternativeName>
        <fullName evidence="1">NADH-plastoquinone oxidoreductase subunit J</fullName>
    </alternativeName>
</protein>
<evidence type="ECO:0000255" key="1">
    <source>
        <dbReference type="HAMAP-Rule" id="MF_01357"/>
    </source>
</evidence>